<protein>
    <recommendedName>
        <fullName evidence="1">Foldase protein PrsA</fullName>
        <ecNumber evidence="1">5.2.1.8</ecNumber>
    </recommendedName>
</protein>
<dbReference type="EC" id="5.2.1.8" evidence="1"/>
<dbReference type="EMBL" id="CP000728">
    <property type="protein sequence ID" value="ABS42665.1"/>
    <property type="molecule type" value="Genomic_DNA"/>
</dbReference>
<dbReference type="RefSeq" id="WP_012101159.1">
    <property type="nucleotide sequence ID" value="NC_009699.1"/>
</dbReference>
<dbReference type="SMR" id="A7GJD2"/>
<dbReference type="KEGG" id="cbf:CLI_3758"/>
<dbReference type="HOGENOM" id="CLU_034646_5_2_9"/>
<dbReference type="Proteomes" id="UP000002410">
    <property type="component" value="Chromosome"/>
</dbReference>
<dbReference type="GO" id="GO:0005886">
    <property type="term" value="C:plasma membrane"/>
    <property type="evidence" value="ECO:0007669"/>
    <property type="project" value="UniProtKB-SubCell"/>
</dbReference>
<dbReference type="GO" id="GO:0003755">
    <property type="term" value="F:peptidyl-prolyl cis-trans isomerase activity"/>
    <property type="evidence" value="ECO:0007669"/>
    <property type="project" value="UniProtKB-UniRule"/>
</dbReference>
<dbReference type="GO" id="GO:0006457">
    <property type="term" value="P:protein folding"/>
    <property type="evidence" value="ECO:0007669"/>
    <property type="project" value="UniProtKB-UniRule"/>
</dbReference>
<dbReference type="Gene3D" id="3.10.50.40">
    <property type="match status" value="1"/>
</dbReference>
<dbReference type="Gene3D" id="1.10.4030.10">
    <property type="entry name" value="Porin chaperone SurA, peptide-binding domain"/>
    <property type="match status" value="1"/>
</dbReference>
<dbReference type="HAMAP" id="MF_01145">
    <property type="entry name" value="Foldase_PrsA"/>
    <property type="match status" value="1"/>
</dbReference>
<dbReference type="InterPro" id="IPR023059">
    <property type="entry name" value="Foldase_PrsA"/>
</dbReference>
<dbReference type="InterPro" id="IPR046357">
    <property type="entry name" value="PPIase_dom_sf"/>
</dbReference>
<dbReference type="InterPro" id="IPR000297">
    <property type="entry name" value="PPIase_PpiC"/>
</dbReference>
<dbReference type="InterPro" id="IPR023058">
    <property type="entry name" value="PPIase_PpiC_CS"/>
</dbReference>
<dbReference type="InterPro" id="IPR050245">
    <property type="entry name" value="PrsA_foldase"/>
</dbReference>
<dbReference type="InterPro" id="IPR027304">
    <property type="entry name" value="Trigger_fact/SurA_dom_sf"/>
</dbReference>
<dbReference type="NCBIfam" id="NF000809">
    <property type="entry name" value="PRK00059.1"/>
    <property type="match status" value="1"/>
</dbReference>
<dbReference type="PANTHER" id="PTHR47245:SF1">
    <property type="entry name" value="FOLDASE PROTEIN PRSA"/>
    <property type="match status" value="1"/>
</dbReference>
<dbReference type="PANTHER" id="PTHR47245">
    <property type="entry name" value="PEPTIDYLPROLYL ISOMERASE"/>
    <property type="match status" value="1"/>
</dbReference>
<dbReference type="Pfam" id="PF13145">
    <property type="entry name" value="Rotamase_2"/>
    <property type="match status" value="1"/>
</dbReference>
<dbReference type="Pfam" id="PF13624">
    <property type="entry name" value="SurA_N_3"/>
    <property type="match status" value="1"/>
</dbReference>
<dbReference type="SUPFAM" id="SSF54534">
    <property type="entry name" value="FKBP-like"/>
    <property type="match status" value="1"/>
</dbReference>
<dbReference type="SUPFAM" id="SSF109998">
    <property type="entry name" value="Triger factor/SurA peptide-binding domain-like"/>
    <property type="match status" value="1"/>
</dbReference>
<dbReference type="PROSITE" id="PS01096">
    <property type="entry name" value="PPIC_PPIASE_1"/>
    <property type="match status" value="1"/>
</dbReference>
<dbReference type="PROSITE" id="PS50198">
    <property type="entry name" value="PPIC_PPIASE_2"/>
    <property type="match status" value="1"/>
</dbReference>
<dbReference type="PROSITE" id="PS51257">
    <property type="entry name" value="PROKAR_LIPOPROTEIN"/>
    <property type="match status" value="1"/>
</dbReference>
<sequence>MKSAKKLLSVLCLGIFILTFTACDMVEKTPEAKAKSTIAKVNGEKIQRKDLDESPNMQQVLSQIKTQYGEEFEKTEQGKEVIKEQKKQILENLITEKVLLQKGKELKVIPKDEELNKEADKKVNEIKAVYNNDEKKFEETLKSTGFTKETLKEYLKDQIVIEKVINEVTKDVKVEDKDAQKYYNENQSMFTEKPNTMNVSHILVKTEDEAKKVKKRLDAKEDFAKVAKEVSQDTGSKEKGGLLGDISYSDSNYDPTFMKAAIALKSGEISNPVHTQWGYHIIKINSKKEYPVKKFDSVKEDIKKQLKQEKQQEAYTKKIEEWKKASKIKTYEKNLL</sequence>
<reference key="1">
    <citation type="submission" date="2007-06" db="EMBL/GenBank/DDBJ databases">
        <authorList>
            <person name="Brinkac L.M."/>
            <person name="Daugherty S."/>
            <person name="Dodson R.J."/>
            <person name="Madupu R."/>
            <person name="Brown J.L."/>
            <person name="Bruce D."/>
            <person name="Detter C."/>
            <person name="Munk C."/>
            <person name="Smith L.A."/>
            <person name="Smith T.J."/>
            <person name="White O."/>
            <person name="Brettin T.S."/>
        </authorList>
    </citation>
    <scope>NUCLEOTIDE SEQUENCE [LARGE SCALE GENOMIC DNA]</scope>
    <source>
        <strain>Langeland / NCTC 10281 / Type F</strain>
    </source>
</reference>
<name>PRSA_CLOBL</name>
<gene>
    <name evidence="1" type="primary">prsA</name>
    <name type="ordered locus">CLI_3758</name>
</gene>
<comment type="function">
    <text evidence="1">Plays a major role in protein secretion by helping the post-translocational extracellular folding of several secreted proteins.</text>
</comment>
<comment type="catalytic activity">
    <reaction evidence="1">
        <text>[protein]-peptidylproline (omega=180) = [protein]-peptidylproline (omega=0)</text>
        <dbReference type="Rhea" id="RHEA:16237"/>
        <dbReference type="Rhea" id="RHEA-COMP:10747"/>
        <dbReference type="Rhea" id="RHEA-COMP:10748"/>
        <dbReference type="ChEBI" id="CHEBI:83833"/>
        <dbReference type="ChEBI" id="CHEBI:83834"/>
        <dbReference type="EC" id="5.2.1.8"/>
    </reaction>
</comment>
<comment type="subcellular location">
    <subcellularLocation>
        <location evidence="1">Cell membrane</location>
        <topology evidence="1">Lipid-anchor</topology>
    </subcellularLocation>
</comment>
<comment type="similarity">
    <text evidence="1">Belongs to the PrsA family.</text>
</comment>
<organism>
    <name type="scientific">Clostridium botulinum (strain Langeland / NCTC 10281 / Type F)</name>
    <dbReference type="NCBI Taxonomy" id="441772"/>
    <lineage>
        <taxon>Bacteria</taxon>
        <taxon>Bacillati</taxon>
        <taxon>Bacillota</taxon>
        <taxon>Clostridia</taxon>
        <taxon>Eubacteriales</taxon>
        <taxon>Clostridiaceae</taxon>
        <taxon>Clostridium</taxon>
    </lineage>
</organism>
<evidence type="ECO:0000255" key="1">
    <source>
        <dbReference type="HAMAP-Rule" id="MF_01145"/>
    </source>
</evidence>
<accession>A7GJD2</accession>
<feature type="signal peptide" evidence="1">
    <location>
        <begin position="1"/>
        <end position="22"/>
    </location>
</feature>
<feature type="chain" id="PRO_1000085048" description="Foldase protein PrsA">
    <location>
        <begin position="23"/>
        <end position="336"/>
    </location>
</feature>
<feature type="domain" description="PpiC" evidence="1">
    <location>
        <begin position="194"/>
        <end position="286"/>
    </location>
</feature>
<feature type="lipid moiety-binding region" description="N-palmitoyl cysteine" evidence="1">
    <location>
        <position position="23"/>
    </location>
</feature>
<feature type="lipid moiety-binding region" description="S-diacylglycerol cysteine" evidence="1">
    <location>
        <position position="23"/>
    </location>
</feature>
<keyword id="KW-1003">Cell membrane</keyword>
<keyword id="KW-0413">Isomerase</keyword>
<keyword id="KW-0449">Lipoprotein</keyword>
<keyword id="KW-0472">Membrane</keyword>
<keyword id="KW-0564">Palmitate</keyword>
<keyword id="KW-0697">Rotamase</keyword>
<keyword id="KW-0732">Signal</keyword>
<proteinExistence type="inferred from homology"/>